<accession>A0A2J6KL39</accession>
<evidence type="ECO:0000250" key="1">
    <source>
        <dbReference type="UniProtKB" id="P82007"/>
    </source>
</evidence>
<evidence type="ECO:0000250" key="2">
    <source>
        <dbReference type="UniProtKB" id="Q9ATH2"/>
    </source>
</evidence>
<evidence type="ECO:0000255" key="3"/>
<evidence type="ECO:0000255" key="4">
    <source>
        <dbReference type="RuleBase" id="RU000628"/>
    </source>
</evidence>
<evidence type="ECO:0000269" key="5">
    <source>
    </source>
</evidence>
<evidence type="ECO:0000269" key="6">
    <source>
    </source>
</evidence>
<evidence type="ECO:0000303" key="7">
    <source>
    </source>
</evidence>
<evidence type="ECO:0000303" key="8">
    <source>
    </source>
</evidence>
<evidence type="ECO:0000305" key="9"/>
<evidence type="ECO:0000305" key="10">
    <source>
    </source>
</evidence>
<evidence type="ECO:0000305" key="11">
    <source>
    </source>
</evidence>
<evidence type="ECO:0000312" key="12">
    <source>
        <dbReference type="EMBL" id="PLY75677.1"/>
    </source>
</evidence>
<name>NLTP_LACSA</name>
<keyword id="KW-0020">Allergen</keyword>
<keyword id="KW-0903">Direct protein sequencing</keyword>
<keyword id="KW-1015">Disulfide bond</keyword>
<keyword id="KW-0446">Lipid-binding</keyword>
<keyword id="KW-0732">Signal</keyword>
<keyword id="KW-0813">Transport</keyword>
<comment type="function">
    <text evidence="1 4">Plant non-specific lipid-transfer proteins transfer phospholipids as well as galactolipids across membranes. May play a role in wax or cutin deposition in the cell walls of expanding epidermal cells and certain secretory tissues.</text>
</comment>
<comment type="allergen">
    <text evidence="5 6">Causes an allergic reaction in human. Binds to IgE.</text>
</comment>
<comment type="similarity">
    <text evidence="3 4 9">Belongs to the plant LTP family.</text>
</comment>
<proteinExistence type="evidence at protein level"/>
<gene>
    <name evidence="12" type="ORF">LSAT_1X82001</name>
</gene>
<dbReference type="EMBL" id="NBSK01006983">
    <property type="protein sequence ID" value="PLY75677.1"/>
    <property type="molecule type" value="Genomic_DNA"/>
</dbReference>
<dbReference type="SMR" id="A0A2J6KL39"/>
<dbReference type="STRING" id="4236.A0A2J6KL39"/>
<dbReference type="EnsemblPlants" id="rna-gnl|WGS:NBSK|LSAT_1X82001_mrna">
    <property type="protein sequence ID" value="cds-PLY75677.1"/>
    <property type="gene ID" value="gene-LSAT_1X82001"/>
</dbReference>
<dbReference type="Gramene" id="rna-gnl|WGS:NBSK|LSAT_1X82001_mrna">
    <property type="protein sequence ID" value="cds-PLY75677.1"/>
    <property type="gene ID" value="gene-LSAT_1X82001"/>
</dbReference>
<dbReference type="OrthoDB" id="1890443at2759"/>
<dbReference type="GO" id="GO:0008289">
    <property type="term" value="F:lipid binding"/>
    <property type="evidence" value="ECO:0007669"/>
    <property type="project" value="UniProtKB-KW"/>
</dbReference>
<dbReference type="GO" id="GO:0006869">
    <property type="term" value="P:lipid transport"/>
    <property type="evidence" value="ECO:0007669"/>
    <property type="project" value="InterPro"/>
</dbReference>
<dbReference type="CDD" id="cd01960">
    <property type="entry name" value="nsLTP1"/>
    <property type="match status" value="1"/>
</dbReference>
<dbReference type="FunFam" id="1.10.110.10:FF:000002">
    <property type="entry name" value="Non-specific lipid-transfer protein"/>
    <property type="match status" value="1"/>
</dbReference>
<dbReference type="Gene3D" id="1.10.110.10">
    <property type="entry name" value="Plant lipid-transfer and hydrophobic proteins"/>
    <property type="match status" value="1"/>
</dbReference>
<dbReference type="InterPro" id="IPR036312">
    <property type="entry name" value="Bifun_inhib/LTP/seed_sf"/>
</dbReference>
<dbReference type="InterPro" id="IPR016140">
    <property type="entry name" value="Bifunc_inhib/LTP/seed_store"/>
</dbReference>
<dbReference type="InterPro" id="IPR000528">
    <property type="entry name" value="Plant_nsLTP"/>
</dbReference>
<dbReference type="PANTHER" id="PTHR33076">
    <property type="entry name" value="NON-SPECIFIC LIPID-TRANSFER PROTEIN 2-RELATED"/>
    <property type="match status" value="1"/>
</dbReference>
<dbReference type="Pfam" id="PF00234">
    <property type="entry name" value="Tryp_alpha_amyl"/>
    <property type="match status" value="1"/>
</dbReference>
<dbReference type="PRINTS" id="PR00382">
    <property type="entry name" value="LIPIDTRNSFER"/>
</dbReference>
<dbReference type="SMART" id="SM00499">
    <property type="entry name" value="AAI"/>
    <property type="match status" value="1"/>
</dbReference>
<dbReference type="SUPFAM" id="SSF47699">
    <property type="entry name" value="Bifunctional inhibitor/lipid-transfer protein/seed storage 2S albumin"/>
    <property type="match status" value="1"/>
</dbReference>
<dbReference type="PROSITE" id="PS00597">
    <property type="entry name" value="PLANT_LTP"/>
    <property type="match status" value="1"/>
</dbReference>
<protein>
    <recommendedName>
        <fullName evidence="7 8">Non-specific lipid-transfer protein Lac s 1</fullName>
        <shortName evidence="7 8">nsLTP Lac s 1</shortName>
    </recommendedName>
    <allergenName evidence="7 8">Lac s 1</allergenName>
</protein>
<organism evidence="12">
    <name type="scientific">Lactuca sativa</name>
    <name type="common">Garden lettuce</name>
    <dbReference type="NCBI Taxonomy" id="4236"/>
    <lineage>
        <taxon>Eukaryota</taxon>
        <taxon>Viridiplantae</taxon>
        <taxon>Streptophyta</taxon>
        <taxon>Embryophyta</taxon>
        <taxon>Tracheophyta</taxon>
        <taxon>Spermatophyta</taxon>
        <taxon>Magnoliopsida</taxon>
        <taxon>eudicotyledons</taxon>
        <taxon>Gunneridae</taxon>
        <taxon>Pentapetalae</taxon>
        <taxon>asterids</taxon>
        <taxon>campanulids</taxon>
        <taxon>Asterales</taxon>
        <taxon>Asteraceae</taxon>
        <taxon>Cichorioideae</taxon>
        <taxon>Cichorieae</taxon>
        <taxon>Lactucinae</taxon>
        <taxon>Lactuca</taxon>
    </lineage>
</organism>
<reference key="1">
    <citation type="journal article" date="2017" name="Nat. Commun.">
        <title>Genome assembly with in vitro proximity ligation data and whole-genome triplication in lettuce.</title>
        <authorList>
            <person name="Reyes-Chin-Wo S."/>
            <person name="Wang Z."/>
            <person name="Yang X."/>
            <person name="Kozik A."/>
            <person name="Arikit S."/>
            <person name="Song C."/>
            <person name="Xia L."/>
            <person name="Froenicke L."/>
            <person name="Lavelle D.O."/>
            <person name="Truco M.J."/>
            <person name="Xia R."/>
            <person name="Zhu S."/>
            <person name="Xu C."/>
            <person name="Xu H."/>
            <person name="Xu X."/>
            <person name="Cox K."/>
            <person name="Korf I."/>
            <person name="Meyers B.C."/>
            <person name="Michelmore R.W."/>
        </authorList>
    </citation>
    <scope>NUCLEOTIDE SEQUENCE [LARGE SCALE GENOMIC DNA]</scope>
    <source>
        <strain>cv. Salinas</strain>
    </source>
</reference>
<reference key="2">
    <citation type="journal article" date="2003" name="Allergy">
        <title>Lettuce anaphylaxis: identification of a lipid transfer protein as the major allergen.</title>
        <authorList>
            <person name="San Miguel-Moncin M."/>
            <person name="Krail M."/>
            <person name="Scheurer S."/>
            <person name="Enrique E."/>
            <person name="Alonso R."/>
            <person name="Conti A."/>
            <person name="Cistero-Bahima A."/>
            <person name="Vieths S."/>
        </authorList>
    </citation>
    <scope>PROTEIN SEQUENCE OF 26-37</scope>
    <scope>ALLERGEN</scope>
</reference>
<reference key="3">
    <citation type="journal article" date="2007" name="Mol. Immunol.">
        <title>Molecular characterisation of Lac s 1, the major allergen from lettuce (Lactuca sativa).</title>
        <authorList>
            <person name="Hartz C."/>
            <person name="San Miguel-Moncin M."/>
            <person name="Cistero-Bahima A."/>
            <person name="Foetisch K."/>
            <person name="Metzner K.J."/>
            <person name="Fortunato D."/>
            <person name="Lidholm J."/>
            <person name="Vieths S."/>
            <person name="Scheurer S."/>
        </authorList>
    </citation>
    <scope>PROTEIN SEQUENCE OF 26-37</scope>
    <scope>IDENTIFICATION BY MASS SPECTROMETRY</scope>
    <scope>ALLERGEN</scope>
    <scope>CIRCULAR DICHROISM ANALYSIS</scope>
</reference>
<feature type="signal peptide" evidence="5 6">
    <location>
        <begin position="1"/>
        <end position="25"/>
    </location>
</feature>
<feature type="chain" id="PRO_5014448417" description="Non-specific lipid-transfer protein Lac s 1" evidence="3 10 11">
    <location>
        <begin position="26"/>
        <end position="117"/>
    </location>
</feature>
<feature type="disulfide bond" evidence="2">
    <location>
        <begin position="29"/>
        <end position="76"/>
    </location>
</feature>
<feature type="disulfide bond" evidence="2">
    <location>
        <begin position="39"/>
        <end position="53"/>
    </location>
</feature>
<feature type="disulfide bond" evidence="2">
    <location>
        <begin position="54"/>
        <end position="99"/>
    </location>
</feature>
<feature type="disulfide bond" evidence="2">
    <location>
        <begin position="74"/>
        <end position="113"/>
    </location>
</feature>
<sequence length="117" mass="11957">MARMAMMILCVVLTCMVVATPYTEAAISCGQVTANLAGCLNYLRNGGAVPPACCNGVRSLNSAAKSTPDRKTACNCLKNASKSVSGIKAANAAGLPGKCGVNIPYQISPNTDCSKVQ</sequence>